<dbReference type="EMBL" id="X66837">
    <property type="protein sequence ID" value="CAA47313.1"/>
    <property type="molecule type" value="mRNA"/>
</dbReference>
<dbReference type="PIR" id="S26280">
    <property type="entry name" value="S26280"/>
</dbReference>
<dbReference type="RefSeq" id="NP_001081523.1">
    <property type="nucleotide sequence ID" value="NM_001088054.2"/>
</dbReference>
<dbReference type="SMR" id="P29693"/>
<dbReference type="BioGRID" id="99230">
    <property type="interactions" value="1"/>
</dbReference>
<dbReference type="IntAct" id="P29693">
    <property type="interactions" value="1"/>
</dbReference>
<dbReference type="iPTMnet" id="P29693"/>
<dbReference type="DNASU" id="397892"/>
<dbReference type="GeneID" id="397892"/>
<dbReference type="KEGG" id="xla:397892"/>
<dbReference type="AGR" id="Xenbase:XB-GENE-958974"/>
<dbReference type="CTD" id="397892"/>
<dbReference type="Xenbase" id="XB-GENE-958974">
    <property type="gene designation" value="eef1d.S"/>
</dbReference>
<dbReference type="OrthoDB" id="331763at2759"/>
<dbReference type="CD-CODE" id="78E86D56">
    <property type="entry name" value="Mitochondrial cloud"/>
</dbReference>
<dbReference type="Proteomes" id="UP000186698">
    <property type="component" value="Chromosome 6S"/>
</dbReference>
<dbReference type="Bgee" id="397892">
    <property type="expression patterns" value="Expressed in spleen and 19 other cell types or tissues"/>
</dbReference>
<dbReference type="GO" id="GO:0005829">
    <property type="term" value="C:cytosol"/>
    <property type="evidence" value="ECO:0000318"/>
    <property type="project" value="GO_Central"/>
</dbReference>
<dbReference type="GO" id="GO:0005853">
    <property type="term" value="C:eukaryotic translation elongation factor 1 complex"/>
    <property type="evidence" value="ECO:0007669"/>
    <property type="project" value="InterPro"/>
</dbReference>
<dbReference type="GO" id="GO:0005085">
    <property type="term" value="F:guanyl-nucleotide exchange factor activity"/>
    <property type="evidence" value="ECO:0000318"/>
    <property type="project" value="GO_Central"/>
</dbReference>
<dbReference type="GO" id="GO:0003746">
    <property type="term" value="F:translation elongation factor activity"/>
    <property type="evidence" value="ECO:0007669"/>
    <property type="project" value="UniProtKB-KW"/>
</dbReference>
<dbReference type="GO" id="GO:0006414">
    <property type="term" value="P:translational elongation"/>
    <property type="evidence" value="ECO:0000318"/>
    <property type="project" value="GO_Central"/>
</dbReference>
<dbReference type="CDD" id="cd00292">
    <property type="entry name" value="EF1B"/>
    <property type="match status" value="1"/>
</dbReference>
<dbReference type="FunFam" id="3.30.70.60:FF:000001">
    <property type="entry name" value="Elongation factor 1-beta 1 like"/>
    <property type="match status" value="1"/>
</dbReference>
<dbReference type="Gene3D" id="1.20.5.340">
    <property type="match status" value="1"/>
</dbReference>
<dbReference type="Gene3D" id="3.30.70.60">
    <property type="match status" value="1"/>
</dbReference>
<dbReference type="InterPro" id="IPR036219">
    <property type="entry name" value="eEF-1beta-like_sf"/>
</dbReference>
<dbReference type="InterPro" id="IPR018940">
    <property type="entry name" value="EF-1_beta_acid_region_euk"/>
</dbReference>
<dbReference type="InterPro" id="IPR049720">
    <property type="entry name" value="EF1B_bsu/dsu"/>
</dbReference>
<dbReference type="InterPro" id="IPR014038">
    <property type="entry name" value="EF1B_bsu/dsu_GNE"/>
</dbReference>
<dbReference type="InterPro" id="IPR014717">
    <property type="entry name" value="Transl_elong_EF1B/ribsomal_bS6"/>
</dbReference>
<dbReference type="InterPro" id="IPR001326">
    <property type="entry name" value="Transl_elong_EF1B_B/D_CS"/>
</dbReference>
<dbReference type="PANTHER" id="PTHR11595">
    <property type="entry name" value="EF-HAND AND COILED-COIL DOMAIN-CONTAINING FAMILY MEMBER"/>
    <property type="match status" value="1"/>
</dbReference>
<dbReference type="PANTHER" id="PTHR11595:SF26">
    <property type="entry name" value="ELONGATION FACTOR 1-DELTA"/>
    <property type="match status" value="1"/>
</dbReference>
<dbReference type="Pfam" id="PF10587">
    <property type="entry name" value="EF-1_beta_acid"/>
    <property type="match status" value="1"/>
</dbReference>
<dbReference type="Pfam" id="PF00736">
    <property type="entry name" value="EF1_GNE"/>
    <property type="match status" value="1"/>
</dbReference>
<dbReference type="SMART" id="SM01182">
    <property type="entry name" value="EF-1_beta_acid"/>
    <property type="match status" value="1"/>
</dbReference>
<dbReference type="SMART" id="SM00888">
    <property type="entry name" value="EF1_GNE"/>
    <property type="match status" value="1"/>
</dbReference>
<dbReference type="SUPFAM" id="SSF54984">
    <property type="entry name" value="eEF-1beta-like"/>
    <property type="match status" value="1"/>
</dbReference>
<dbReference type="PROSITE" id="PS00824">
    <property type="entry name" value="EF1BD_1"/>
    <property type="match status" value="1"/>
</dbReference>
<dbReference type="PROSITE" id="PS00825">
    <property type="entry name" value="EF1BD_2"/>
    <property type="match status" value="1"/>
</dbReference>
<name>EF1D_XENLA</name>
<proteinExistence type="evidence at protein level"/>
<gene>
    <name type="primary">eef1d</name>
</gene>
<comment type="function">
    <text>EF-1-beta and EF-1-delta stimulate the exchange of GDP bound to EF-1-alpha to GTP.</text>
</comment>
<comment type="subunit">
    <text>EF-1 is composed of 4 subunits: alpha, beta, delta, and gamma.</text>
</comment>
<comment type="similarity">
    <text evidence="2">Belongs to the EF-1-beta/EF-1-delta family.</text>
</comment>
<accession>P29693</accession>
<feature type="chain" id="PRO_0000155049" description="Elongation factor 1-delta">
    <location>
        <begin position="1"/>
        <end position="265"/>
    </location>
</feature>
<feature type="region of interest" description="Disordered" evidence="1">
    <location>
        <begin position="31"/>
        <end position="64"/>
    </location>
</feature>
<feature type="region of interest" description="Disordered" evidence="1">
    <location>
        <begin position="118"/>
        <end position="155"/>
    </location>
</feature>
<feature type="compositionally biased region" description="Polar residues" evidence="1">
    <location>
        <begin position="31"/>
        <end position="54"/>
    </location>
</feature>
<feature type="compositionally biased region" description="Acidic residues" evidence="1">
    <location>
        <begin position="130"/>
        <end position="153"/>
    </location>
</feature>
<sequence length="265" mass="29237">MSAFVITTEQVWLDKYKYDDAEKQYYENLSMGSASNKPHNSPQSAASALSNSGDGSELAARVANLEQENQSLHKVVKDLQSAISKLESRLSTLEKSSKSQKPAAASQPAIEVAARVQKVQVTPAAKEENGTGEDDDDDDDIDLFGSDNEEEDAEAARIREERLKQYAEKKSKKPGVIAKSSILLDVKPWDDETDMAKLEECVRTVQMDGLVWGSSKLVPVGYGIKKLQIQCVVEDDKVGTDILEEEITKFEDYVQSVDIAAFNKI</sequence>
<protein>
    <recommendedName>
        <fullName>Elongation factor 1-delta</fullName>
        <shortName>EF-1-delta</shortName>
    </recommendedName>
    <alternativeName>
        <fullName>P36</fullName>
    </alternativeName>
</protein>
<reference key="1">
    <citation type="journal article" date="1992" name="Nucleic Acids Res.">
        <title>Molecular cloning of a new guanine nucleotide-exchange protein, EF1 delta.</title>
        <authorList>
            <person name="Morales J."/>
            <person name="Cormier P."/>
            <person name="Mulner-Lorillon O."/>
            <person name="Poulhe R."/>
            <person name="Belle' R."/>
        </authorList>
    </citation>
    <scope>NUCLEOTIDE SEQUENCE [MRNA]</scope>
    <source>
        <tissue>Oocyte</tissue>
    </source>
</reference>
<reference key="2">
    <citation type="journal article" date="1991" name="J. Biol. Chem.">
        <title>A major substrate of maturation promoting factor identified as elongation factor 1 beta gamma delta in Xenopus laevis.</title>
        <authorList>
            <person name="Janssen G.M.C."/>
            <person name="Morales J."/>
            <person name="Schipper A."/>
            <person name="Labbes J.C."/>
            <person name="Mulner-Lorillon O."/>
            <person name="Belle R."/>
            <person name="Moeller W."/>
        </authorList>
    </citation>
    <scope>PRELIMINARY PROTEIN SEQUENCE OF 15-27; 112-118; 186-192 AND 226-259</scope>
</reference>
<organism>
    <name type="scientific">Xenopus laevis</name>
    <name type="common">African clawed frog</name>
    <dbReference type="NCBI Taxonomy" id="8355"/>
    <lineage>
        <taxon>Eukaryota</taxon>
        <taxon>Metazoa</taxon>
        <taxon>Chordata</taxon>
        <taxon>Craniata</taxon>
        <taxon>Vertebrata</taxon>
        <taxon>Euteleostomi</taxon>
        <taxon>Amphibia</taxon>
        <taxon>Batrachia</taxon>
        <taxon>Anura</taxon>
        <taxon>Pipoidea</taxon>
        <taxon>Pipidae</taxon>
        <taxon>Xenopodinae</taxon>
        <taxon>Xenopus</taxon>
        <taxon>Xenopus</taxon>
    </lineage>
</organism>
<keyword id="KW-0903">Direct protein sequencing</keyword>
<keyword id="KW-0251">Elongation factor</keyword>
<keyword id="KW-0648">Protein biosynthesis</keyword>
<keyword id="KW-1185">Reference proteome</keyword>
<evidence type="ECO:0000256" key="1">
    <source>
        <dbReference type="SAM" id="MobiDB-lite"/>
    </source>
</evidence>
<evidence type="ECO:0000305" key="2"/>